<accession>B6IA61</accession>
<reference key="1">
    <citation type="journal article" date="2008" name="DNA Res.">
        <title>Complete genome sequence and comparative analysis of the wild-type commensal Escherichia coli strain SE11 isolated from a healthy adult.</title>
        <authorList>
            <person name="Oshima K."/>
            <person name="Toh H."/>
            <person name="Ogura Y."/>
            <person name="Sasamoto H."/>
            <person name="Morita H."/>
            <person name="Park S.-H."/>
            <person name="Ooka T."/>
            <person name="Iyoda S."/>
            <person name="Taylor T.D."/>
            <person name="Hayashi T."/>
            <person name="Itoh K."/>
            <person name="Hattori M."/>
        </authorList>
    </citation>
    <scope>NUCLEOTIDE SEQUENCE [LARGE SCALE GENOMIC DNA]</scope>
    <source>
        <strain>SE11</strain>
    </source>
</reference>
<evidence type="ECO:0000255" key="1">
    <source>
        <dbReference type="HAMAP-Rule" id="MF_01850"/>
    </source>
</evidence>
<comment type="function">
    <text evidence="1">Catalyzes the ATP-dependent 2-thiolation of cytidine in position 32 of tRNA, to form 2-thiocytidine (s(2)C32). The sulfur atoms are provided by the cysteine/cysteine desulfurase (IscS) system.</text>
</comment>
<comment type="catalytic activity">
    <reaction evidence="1">
        <text>cytidine(32) in tRNA + S-sulfanyl-L-cysteinyl-[cysteine desulfurase] + AH2 + ATP = 2-thiocytidine(32) in tRNA + L-cysteinyl-[cysteine desulfurase] + A + AMP + diphosphate + H(+)</text>
        <dbReference type="Rhea" id="RHEA:57048"/>
        <dbReference type="Rhea" id="RHEA-COMP:10288"/>
        <dbReference type="Rhea" id="RHEA-COMP:12157"/>
        <dbReference type="Rhea" id="RHEA-COMP:12158"/>
        <dbReference type="Rhea" id="RHEA-COMP:14821"/>
        <dbReference type="ChEBI" id="CHEBI:13193"/>
        <dbReference type="ChEBI" id="CHEBI:15378"/>
        <dbReference type="ChEBI" id="CHEBI:17499"/>
        <dbReference type="ChEBI" id="CHEBI:29950"/>
        <dbReference type="ChEBI" id="CHEBI:30616"/>
        <dbReference type="ChEBI" id="CHEBI:33019"/>
        <dbReference type="ChEBI" id="CHEBI:61963"/>
        <dbReference type="ChEBI" id="CHEBI:82748"/>
        <dbReference type="ChEBI" id="CHEBI:141453"/>
        <dbReference type="ChEBI" id="CHEBI:456215"/>
    </reaction>
    <physiologicalReaction direction="left-to-right" evidence="1">
        <dbReference type="Rhea" id="RHEA:57049"/>
    </physiologicalReaction>
</comment>
<comment type="cofactor">
    <cofactor evidence="1">
        <name>Mg(2+)</name>
        <dbReference type="ChEBI" id="CHEBI:18420"/>
    </cofactor>
</comment>
<comment type="cofactor">
    <cofactor evidence="1">
        <name>[4Fe-4S] cluster</name>
        <dbReference type="ChEBI" id="CHEBI:49883"/>
    </cofactor>
    <text evidence="1">Binds 1 [4Fe-4S] cluster per subunit. The cluster is chelated by three Cys residues, the fourth Fe has a free coordination site that may bind a sulfur atom transferred from the persulfide of IscS.</text>
</comment>
<comment type="pathway">
    <text evidence="1">tRNA modification.</text>
</comment>
<comment type="subunit">
    <text evidence="1">Homodimer.</text>
</comment>
<comment type="subcellular location">
    <subcellularLocation>
        <location evidence="1">Cytoplasm</location>
    </subcellularLocation>
</comment>
<comment type="miscellaneous">
    <text evidence="1">The thiolation reaction likely consists of two steps: a first activation step by ATP to form an adenylated intermediate of the target base of tRNA, and a second nucleophilic substitution step of the sulfur (S) atom supplied by the hydrosulfide attached to the Fe-S cluster.</text>
</comment>
<comment type="similarity">
    <text evidence="1">Belongs to the TtcA family.</text>
</comment>
<protein>
    <recommendedName>
        <fullName evidence="1">tRNA-cytidine(32) 2-sulfurtransferase</fullName>
        <ecNumber evidence="1">2.8.1.-</ecNumber>
    </recommendedName>
    <alternativeName>
        <fullName evidence="1">Two-thiocytidine biosynthesis protein A</fullName>
    </alternativeName>
    <alternativeName>
        <fullName evidence="1">tRNA 2-thiocytidine biosynthesis protein TtcA</fullName>
    </alternativeName>
</protein>
<keyword id="KW-0004">4Fe-4S</keyword>
<keyword id="KW-0067">ATP-binding</keyword>
<keyword id="KW-0963">Cytoplasm</keyword>
<keyword id="KW-0408">Iron</keyword>
<keyword id="KW-0411">Iron-sulfur</keyword>
<keyword id="KW-0460">Magnesium</keyword>
<keyword id="KW-0479">Metal-binding</keyword>
<keyword id="KW-0547">Nucleotide-binding</keyword>
<keyword id="KW-0694">RNA-binding</keyword>
<keyword id="KW-0808">Transferase</keyword>
<keyword id="KW-0819">tRNA processing</keyword>
<keyword id="KW-0820">tRNA-binding</keyword>
<sequence length="311" mass="35515">MQENQQITKKEQYNLNKLQKRLRRNVGEAIADFNMIEEGDRIMVCLSGGKDSYTMLEILRNLQQSAPINFSLVAVNLDQKQPGFPEHVLPEYLEKLGVEYKIVEENTYGIVKEKIPEGKTTCSLCSRLRRGILYRTATELGATKIALGHHRDDILQTLFLNMFYGGKMKGMPPKLMSDDGKHIVIRPLAYCREKDIQRFADAKAFPIIPCNLCGSQPNLQRQVIADMLRDWDKRYPGRIETMFSAMQNVVPSHLCDTNLFDFKGITHGSEVVNGGDLAFDREEIPLQPAGWQPEEDENQLDELRLNVVEVK</sequence>
<dbReference type="EC" id="2.8.1.-" evidence="1"/>
<dbReference type="EMBL" id="AP009240">
    <property type="protein sequence ID" value="BAG76922.1"/>
    <property type="molecule type" value="Genomic_DNA"/>
</dbReference>
<dbReference type="RefSeq" id="WP_001157407.1">
    <property type="nucleotide sequence ID" value="NC_011415.1"/>
</dbReference>
<dbReference type="SMR" id="B6IA61"/>
<dbReference type="GeneID" id="93775481"/>
<dbReference type="KEGG" id="ecy:ECSE_1398"/>
<dbReference type="HOGENOM" id="CLU_026481_0_0_6"/>
<dbReference type="Proteomes" id="UP000008199">
    <property type="component" value="Chromosome"/>
</dbReference>
<dbReference type="GO" id="GO:0005737">
    <property type="term" value="C:cytoplasm"/>
    <property type="evidence" value="ECO:0007669"/>
    <property type="project" value="UniProtKB-SubCell"/>
</dbReference>
<dbReference type="GO" id="GO:0051539">
    <property type="term" value="F:4 iron, 4 sulfur cluster binding"/>
    <property type="evidence" value="ECO:0007669"/>
    <property type="project" value="UniProtKB-UniRule"/>
</dbReference>
<dbReference type="GO" id="GO:0005524">
    <property type="term" value="F:ATP binding"/>
    <property type="evidence" value="ECO:0007669"/>
    <property type="project" value="UniProtKB-UniRule"/>
</dbReference>
<dbReference type="GO" id="GO:0000287">
    <property type="term" value="F:magnesium ion binding"/>
    <property type="evidence" value="ECO:0007669"/>
    <property type="project" value="UniProtKB-UniRule"/>
</dbReference>
<dbReference type="GO" id="GO:0016783">
    <property type="term" value="F:sulfurtransferase activity"/>
    <property type="evidence" value="ECO:0007669"/>
    <property type="project" value="UniProtKB-UniRule"/>
</dbReference>
<dbReference type="GO" id="GO:0000049">
    <property type="term" value="F:tRNA binding"/>
    <property type="evidence" value="ECO:0007669"/>
    <property type="project" value="UniProtKB-KW"/>
</dbReference>
<dbReference type="GO" id="GO:0034227">
    <property type="term" value="P:tRNA thio-modification"/>
    <property type="evidence" value="ECO:0007669"/>
    <property type="project" value="UniProtKB-UniRule"/>
</dbReference>
<dbReference type="CDD" id="cd24138">
    <property type="entry name" value="TtcA-like"/>
    <property type="match status" value="1"/>
</dbReference>
<dbReference type="FunFam" id="3.40.50.620:FF:000046">
    <property type="entry name" value="tRNA-cytidine(32) 2-sulfurtransferase"/>
    <property type="match status" value="1"/>
</dbReference>
<dbReference type="Gene3D" id="3.40.50.620">
    <property type="entry name" value="HUPs"/>
    <property type="match status" value="1"/>
</dbReference>
<dbReference type="HAMAP" id="MF_01850">
    <property type="entry name" value="TtcA"/>
    <property type="match status" value="1"/>
</dbReference>
<dbReference type="InterPro" id="IPR014729">
    <property type="entry name" value="Rossmann-like_a/b/a_fold"/>
</dbReference>
<dbReference type="InterPro" id="IPR011063">
    <property type="entry name" value="TilS/TtcA_N"/>
</dbReference>
<dbReference type="InterPro" id="IPR012089">
    <property type="entry name" value="tRNA_Cyd_32_2_STrfase"/>
</dbReference>
<dbReference type="InterPro" id="IPR035107">
    <property type="entry name" value="tRNA_thiolation_TtcA_Ctu1"/>
</dbReference>
<dbReference type="NCBIfam" id="NF007972">
    <property type="entry name" value="PRK10696.1"/>
    <property type="match status" value="1"/>
</dbReference>
<dbReference type="PANTHER" id="PTHR43686:SF1">
    <property type="entry name" value="AMINOTRAN_5 DOMAIN-CONTAINING PROTEIN"/>
    <property type="match status" value="1"/>
</dbReference>
<dbReference type="PANTHER" id="PTHR43686">
    <property type="entry name" value="SULFURTRANSFERASE-RELATED"/>
    <property type="match status" value="1"/>
</dbReference>
<dbReference type="Pfam" id="PF01171">
    <property type="entry name" value="ATP_bind_3"/>
    <property type="match status" value="1"/>
</dbReference>
<dbReference type="PIRSF" id="PIRSF004976">
    <property type="entry name" value="ATPase_YdaO"/>
    <property type="match status" value="1"/>
</dbReference>
<dbReference type="SUPFAM" id="SSF52402">
    <property type="entry name" value="Adenine nucleotide alpha hydrolases-like"/>
    <property type="match status" value="1"/>
</dbReference>
<feature type="chain" id="PRO_1000188641" description="tRNA-cytidine(32) 2-sulfurtransferase">
    <location>
        <begin position="1"/>
        <end position="311"/>
    </location>
</feature>
<feature type="short sequence motif" description="PP-loop motif" evidence="1">
    <location>
        <begin position="47"/>
        <end position="52"/>
    </location>
</feature>
<feature type="binding site" evidence="1">
    <location>
        <position position="122"/>
    </location>
    <ligand>
        <name>[4Fe-4S] cluster</name>
        <dbReference type="ChEBI" id="CHEBI:49883"/>
    </ligand>
</feature>
<feature type="binding site" evidence="1">
    <location>
        <position position="125"/>
    </location>
    <ligand>
        <name>[4Fe-4S] cluster</name>
        <dbReference type="ChEBI" id="CHEBI:49883"/>
    </ligand>
</feature>
<feature type="binding site" evidence="1">
    <location>
        <position position="213"/>
    </location>
    <ligand>
        <name>[4Fe-4S] cluster</name>
        <dbReference type="ChEBI" id="CHEBI:49883"/>
    </ligand>
</feature>
<proteinExistence type="inferred from homology"/>
<gene>
    <name evidence="1" type="primary">ttcA</name>
    <name type="ordered locus">ECSE_1398</name>
</gene>
<organism>
    <name type="scientific">Escherichia coli (strain SE11)</name>
    <dbReference type="NCBI Taxonomy" id="409438"/>
    <lineage>
        <taxon>Bacteria</taxon>
        <taxon>Pseudomonadati</taxon>
        <taxon>Pseudomonadota</taxon>
        <taxon>Gammaproteobacteria</taxon>
        <taxon>Enterobacterales</taxon>
        <taxon>Enterobacteriaceae</taxon>
        <taxon>Escherichia</taxon>
    </lineage>
</organism>
<name>TTCA_ECOSE</name>